<reference key="1">
    <citation type="journal article" date="1991" name="Mol. Gen. Genet.">
        <title>The regulatory status of the fixL- and fixJ-like genes in Bradyrhizobium japonicum may be different from that in Rhizobium meliloti.</title>
        <authorList>
            <person name="Anthamatten D."/>
            <person name="Hennecke H."/>
        </authorList>
    </citation>
    <scope>NUCLEOTIDE SEQUENCE [GENOMIC DNA]</scope>
    <source>
        <strain>USDA 110spc4</strain>
    </source>
</reference>
<reference key="2">
    <citation type="journal article" date="2002" name="DNA Res.">
        <title>Complete genomic sequence of nitrogen-fixing symbiotic bacterium Bradyrhizobium japonicum USDA110.</title>
        <authorList>
            <person name="Kaneko T."/>
            <person name="Nakamura Y."/>
            <person name="Sato S."/>
            <person name="Minamisawa K."/>
            <person name="Uchiumi T."/>
            <person name="Sasamoto S."/>
            <person name="Watanabe A."/>
            <person name="Idesawa K."/>
            <person name="Iriguchi M."/>
            <person name="Kawashima K."/>
            <person name="Kohara M."/>
            <person name="Matsumoto M."/>
            <person name="Shimpo S."/>
            <person name="Tsuruoka H."/>
            <person name="Wada T."/>
            <person name="Yamada M."/>
            <person name="Tabata S."/>
        </authorList>
    </citation>
    <scope>NUCLEOTIDE SEQUENCE [LARGE SCALE GENOMIC DNA]</scope>
    <source>
        <strain>JCM 10833 / BCRC 13528 / IAM 13628 / NBRC 14792 / USDA 110</strain>
    </source>
</reference>
<reference key="3">
    <citation type="journal article" date="1998" name="Proc. Natl. Acad. Sci. U.S.A.">
        <title>Structure of a biological oxygen sensor: a new mechanism for heme-driven signal transduction.</title>
        <authorList>
            <person name="Gong W."/>
            <person name="Hao B."/>
            <person name="Mansy S.S."/>
            <person name="Gonzalez G."/>
            <person name="Gilles-Gonzalez M.-A."/>
            <person name="Chan M.K."/>
        </authorList>
    </citation>
    <scope>X-RAY CRYSTALLOGRAPHY (2.7 ANGSTROMS) OF 154-270</scope>
</reference>
<reference key="4">
    <citation type="journal article" date="2000" name="Biochemistry">
        <title>New mechanistic insights from structural studies of the oxygen-sensing domain of Bradyrhizobium japonicum FixL.</title>
        <authorList>
            <person name="Gong W."/>
            <person name="Hao B."/>
            <person name="Chan M.K."/>
        </authorList>
    </citation>
    <scope>X-RAY CRYSTALLOGRAPHY (2.3 ANGSTROMS) OF 154-270</scope>
</reference>
<comment type="function">
    <text>Putative oxygen sensor; modulates the activity of FixJ, a transcriptional activator of nitrogen fixation fixK gene. FixL probably acts as a kinase that phosphorylates FixJ.</text>
</comment>
<comment type="catalytic activity">
    <reaction>
        <text>ATP + protein L-histidine = ADP + protein N-phospho-L-histidine.</text>
        <dbReference type="EC" id="2.7.13.3"/>
    </reaction>
</comment>
<comment type="cofactor">
    <cofactor>
        <name>heme</name>
        <dbReference type="ChEBI" id="CHEBI:30413"/>
    </cofactor>
    <text>Binds 1 heme group per subunit.</text>
</comment>
<comment type="activity regulation">
    <text>The heme moiety regulates the kinase activity.</text>
</comment>
<gene>
    <name type="primary">fixL</name>
    <name type="ordered locus">bll2760</name>
</gene>
<protein>
    <recommendedName>
        <fullName>Sensor protein FixL</fullName>
        <ecNumber>2.7.13.3</ecNumber>
    </recommendedName>
</protein>
<proteinExistence type="evidence at protein level"/>
<keyword id="KW-0002">3D-structure</keyword>
<keyword id="KW-0067">ATP-binding</keyword>
<keyword id="KW-0349">Heme</keyword>
<keyword id="KW-0408">Iron</keyword>
<keyword id="KW-0418">Kinase</keyword>
<keyword id="KW-0479">Metal-binding</keyword>
<keyword id="KW-0535">Nitrogen fixation</keyword>
<keyword id="KW-0547">Nucleotide-binding</keyword>
<keyword id="KW-0597">Phosphoprotein</keyword>
<keyword id="KW-1185">Reference proteome</keyword>
<keyword id="KW-0677">Repeat</keyword>
<keyword id="KW-0808">Transferase</keyword>
<keyword id="KW-0902">Two-component regulatory system</keyword>
<accession>P23222</accession>
<name>FIXL_BRADU</name>
<dbReference type="EC" id="2.7.13.3"/>
<dbReference type="EMBL" id="X56808">
    <property type="protein sequence ID" value="CAA40143.1"/>
    <property type="molecule type" value="Genomic_DNA"/>
</dbReference>
<dbReference type="EMBL" id="AJ005001">
    <property type="protein sequence ID" value="CAA06276.1"/>
    <property type="molecule type" value="Genomic_DNA"/>
</dbReference>
<dbReference type="EMBL" id="BA000040">
    <property type="protein sequence ID" value="BAC48025.1"/>
    <property type="molecule type" value="Genomic_DNA"/>
</dbReference>
<dbReference type="PIR" id="S13330">
    <property type="entry name" value="S13330"/>
</dbReference>
<dbReference type="RefSeq" id="NP_769400.1">
    <property type="nucleotide sequence ID" value="NC_004463.1"/>
</dbReference>
<dbReference type="RefSeq" id="WP_011085545.1">
    <property type="nucleotide sequence ID" value="NC_004463.1"/>
</dbReference>
<dbReference type="PDB" id="1DP6">
    <property type="method" value="X-ray"/>
    <property type="resolution" value="2.30 A"/>
    <property type="chains" value="A=141-270"/>
</dbReference>
<dbReference type="PDB" id="1DP8">
    <property type="method" value="X-ray"/>
    <property type="resolution" value="2.50 A"/>
    <property type="chains" value="A=141-270"/>
</dbReference>
<dbReference type="PDB" id="1DP9">
    <property type="method" value="X-ray"/>
    <property type="resolution" value="2.60 A"/>
    <property type="chains" value="A=141-270"/>
</dbReference>
<dbReference type="PDB" id="1DRM">
    <property type="method" value="X-ray"/>
    <property type="resolution" value="2.40 A"/>
    <property type="chains" value="A=141-270"/>
</dbReference>
<dbReference type="PDB" id="1LSV">
    <property type="method" value="X-ray"/>
    <property type="resolution" value="2.40 A"/>
    <property type="chains" value="A=141-270"/>
</dbReference>
<dbReference type="PDB" id="1LSW">
    <property type="method" value="X-ray"/>
    <property type="resolution" value="2.20 A"/>
    <property type="chains" value="A=141-270"/>
</dbReference>
<dbReference type="PDB" id="1LSX">
    <property type="method" value="X-ray"/>
    <property type="resolution" value="2.70 A"/>
    <property type="chains" value="A=141-270"/>
</dbReference>
<dbReference type="PDB" id="1LT0">
    <property type="method" value="X-ray"/>
    <property type="resolution" value="2.40 A"/>
    <property type="chains" value="A=141-270"/>
</dbReference>
<dbReference type="PDB" id="1XJ2">
    <property type="method" value="X-ray"/>
    <property type="resolution" value="2.00 A"/>
    <property type="chains" value="A=154-269"/>
</dbReference>
<dbReference type="PDB" id="1XJ3">
    <property type="method" value="X-ray"/>
    <property type="resolution" value="1.90 A"/>
    <property type="chains" value="A=154-269"/>
</dbReference>
<dbReference type="PDB" id="1XJ4">
    <property type="method" value="X-ray"/>
    <property type="resolution" value="1.80 A"/>
    <property type="chains" value="A/B=151-269"/>
</dbReference>
<dbReference type="PDB" id="1XJ6">
    <property type="method" value="X-ray"/>
    <property type="resolution" value="1.90 A"/>
    <property type="chains" value="A/B=151-269"/>
</dbReference>
<dbReference type="PDB" id="1Y28">
    <property type="method" value="X-ray"/>
    <property type="resolution" value="2.10 A"/>
    <property type="chains" value="A=141-270"/>
</dbReference>
<dbReference type="PDB" id="2CMN">
    <property type="method" value="X-ray"/>
    <property type="resolution" value="2.30 A"/>
    <property type="chains" value="A=141-270"/>
</dbReference>
<dbReference type="PDB" id="2OWH">
    <property type="method" value="X-ray"/>
    <property type="resolution" value="2.50 A"/>
    <property type="chains" value="A=154-269"/>
</dbReference>
<dbReference type="PDB" id="2OWJ">
    <property type="method" value="X-ray"/>
    <property type="resolution" value="2.50 A"/>
    <property type="chains" value="A=154-269"/>
</dbReference>
<dbReference type="PDB" id="2VV6">
    <property type="method" value="X-ray"/>
    <property type="resolution" value="1.50 A"/>
    <property type="chains" value="A/B/C/D=151-269"/>
</dbReference>
<dbReference type="PDB" id="2VV7">
    <property type="method" value="X-ray"/>
    <property type="resolution" value="1.81 A"/>
    <property type="chains" value="A/B/C/D=151-269"/>
</dbReference>
<dbReference type="PDB" id="2VV8">
    <property type="method" value="X-ray"/>
    <property type="resolution" value="1.61 A"/>
    <property type="chains" value="A/B/C/D=151-269"/>
</dbReference>
<dbReference type="PDB" id="4GCZ">
    <property type="method" value="X-ray"/>
    <property type="resolution" value="2.30 A"/>
    <property type="chains" value="A/B=257-505"/>
</dbReference>
<dbReference type="PDB" id="8A3U">
    <property type="method" value="X-ray"/>
    <property type="resolution" value="2.33 A"/>
    <property type="chains" value="A=258-505"/>
</dbReference>
<dbReference type="PDB" id="8A52">
    <property type="method" value="X-ray"/>
    <property type="resolution" value="2.46 A"/>
    <property type="chains" value="A/B=258-505"/>
</dbReference>
<dbReference type="PDB" id="8A6X">
    <property type="method" value="X-ray"/>
    <property type="resolution" value="2.45 A"/>
    <property type="chains" value="A/B=258-505"/>
</dbReference>
<dbReference type="PDB" id="8A7F">
    <property type="method" value="X-ray"/>
    <property type="resolution" value="2.71 A"/>
    <property type="chains" value="A/B=258-505"/>
</dbReference>
<dbReference type="PDB" id="8A7H">
    <property type="method" value="X-ray"/>
    <property type="resolution" value="3.15 A"/>
    <property type="chains" value="A/B=258-505"/>
</dbReference>
<dbReference type="PDB" id="8JS5">
    <property type="method" value="X-ray"/>
    <property type="resolution" value="2.95 A"/>
    <property type="chains" value="A/B/C/D/E/F/G/H/I/J=2-274"/>
</dbReference>
<dbReference type="PDB" id="8JS6">
    <property type="method" value="X-ray"/>
    <property type="resolution" value="2.70 A"/>
    <property type="chains" value="A/B/C/D/E/F/G/H/I/J=2-274"/>
</dbReference>
<dbReference type="PDB" id="8JS7">
    <property type="method" value="X-ray"/>
    <property type="resolution" value="2.85 A"/>
    <property type="chains" value="A/B/C/D/E/F/G/H/I/J=2-274"/>
</dbReference>
<dbReference type="PDBsum" id="1DP6"/>
<dbReference type="PDBsum" id="1DP8"/>
<dbReference type="PDBsum" id="1DP9"/>
<dbReference type="PDBsum" id="1DRM"/>
<dbReference type="PDBsum" id="1LSV"/>
<dbReference type="PDBsum" id="1LSW"/>
<dbReference type="PDBsum" id="1LSX"/>
<dbReference type="PDBsum" id="1LT0"/>
<dbReference type="PDBsum" id="1XJ2"/>
<dbReference type="PDBsum" id="1XJ3"/>
<dbReference type="PDBsum" id="1XJ4"/>
<dbReference type="PDBsum" id="1XJ6"/>
<dbReference type="PDBsum" id="1Y28"/>
<dbReference type="PDBsum" id="2CMN"/>
<dbReference type="PDBsum" id="2OWH"/>
<dbReference type="PDBsum" id="2OWJ"/>
<dbReference type="PDBsum" id="2VV6"/>
<dbReference type="PDBsum" id="2VV7"/>
<dbReference type="PDBsum" id="2VV8"/>
<dbReference type="PDBsum" id="4GCZ"/>
<dbReference type="PDBsum" id="8A3U"/>
<dbReference type="PDBsum" id="8A52"/>
<dbReference type="PDBsum" id="8A6X"/>
<dbReference type="PDBsum" id="8A7F"/>
<dbReference type="PDBsum" id="8A7H"/>
<dbReference type="PDBsum" id="8JS5"/>
<dbReference type="PDBsum" id="8JS6"/>
<dbReference type="PDBsum" id="8JS7"/>
<dbReference type="SMR" id="P23222"/>
<dbReference type="STRING" id="224911.AAV28_10825"/>
<dbReference type="DrugBank" id="DB02671">
    <property type="generic name" value="1-Methylimidazole"/>
</dbReference>
<dbReference type="DrugBank" id="DB03366">
    <property type="generic name" value="Imidazole"/>
</dbReference>
<dbReference type="EnsemblBacteria" id="BAC48025">
    <property type="protein sequence ID" value="BAC48025"/>
    <property type="gene ID" value="BAC48025"/>
</dbReference>
<dbReference type="GeneID" id="46489806"/>
<dbReference type="KEGG" id="bja:bll2760"/>
<dbReference type="PATRIC" id="fig|224911.44.peg.2381"/>
<dbReference type="eggNOG" id="COG4191">
    <property type="taxonomic scope" value="Bacteria"/>
</dbReference>
<dbReference type="HOGENOM" id="CLU_000445_114_39_5"/>
<dbReference type="InParanoid" id="P23222"/>
<dbReference type="OrthoDB" id="9789238at2"/>
<dbReference type="PhylomeDB" id="P23222"/>
<dbReference type="BRENDA" id="2.7.13.3">
    <property type="organism ID" value="929"/>
</dbReference>
<dbReference type="EvolutionaryTrace" id="P23222"/>
<dbReference type="Proteomes" id="UP000002526">
    <property type="component" value="Chromosome"/>
</dbReference>
<dbReference type="GO" id="GO:0005886">
    <property type="term" value="C:plasma membrane"/>
    <property type="evidence" value="ECO:0000318"/>
    <property type="project" value="GO_Central"/>
</dbReference>
<dbReference type="GO" id="GO:0005524">
    <property type="term" value="F:ATP binding"/>
    <property type="evidence" value="ECO:0007669"/>
    <property type="project" value="UniProtKB-KW"/>
</dbReference>
<dbReference type="GO" id="GO:0009927">
    <property type="term" value="F:histidine phosphotransfer kinase activity"/>
    <property type="evidence" value="ECO:0000318"/>
    <property type="project" value="GO_Central"/>
</dbReference>
<dbReference type="GO" id="GO:0046872">
    <property type="term" value="F:metal ion binding"/>
    <property type="evidence" value="ECO:0007669"/>
    <property type="project" value="UniProtKB-KW"/>
</dbReference>
<dbReference type="GO" id="GO:0000155">
    <property type="term" value="F:phosphorelay sensor kinase activity"/>
    <property type="evidence" value="ECO:0000318"/>
    <property type="project" value="GO_Central"/>
</dbReference>
<dbReference type="GO" id="GO:0009399">
    <property type="term" value="P:nitrogen fixation"/>
    <property type="evidence" value="ECO:0007669"/>
    <property type="project" value="UniProtKB-KW"/>
</dbReference>
<dbReference type="GO" id="GO:0000160">
    <property type="term" value="P:phosphorelay signal transduction system"/>
    <property type="evidence" value="ECO:0000318"/>
    <property type="project" value="GO_Central"/>
</dbReference>
<dbReference type="GO" id="GO:0006355">
    <property type="term" value="P:regulation of DNA-templated transcription"/>
    <property type="evidence" value="ECO:0007669"/>
    <property type="project" value="InterPro"/>
</dbReference>
<dbReference type="CDD" id="cd00082">
    <property type="entry name" value="HisKA"/>
    <property type="match status" value="1"/>
</dbReference>
<dbReference type="CDD" id="cd00130">
    <property type="entry name" value="PAS"/>
    <property type="match status" value="2"/>
</dbReference>
<dbReference type="FunFam" id="3.30.450.20:FF:000060">
    <property type="entry name" value="Sensor protein FixL"/>
    <property type="match status" value="1"/>
</dbReference>
<dbReference type="FunFam" id="1.10.287.130:FF:000055">
    <property type="entry name" value="Two-component sensor histidine kinase"/>
    <property type="match status" value="1"/>
</dbReference>
<dbReference type="FunFam" id="3.30.565.10:FF:000042">
    <property type="entry name" value="Two-component sensor histidine kinase KdpD"/>
    <property type="match status" value="1"/>
</dbReference>
<dbReference type="Gene3D" id="1.10.287.130">
    <property type="match status" value="1"/>
</dbReference>
<dbReference type="Gene3D" id="2.10.70.100">
    <property type="match status" value="1"/>
</dbReference>
<dbReference type="Gene3D" id="6.10.250.2580">
    <property type="match status" value="1"/>
</dbReference>
<dbReference type="Gene3D" id="3.30.565.10">
    <property type="entry name" value="Histidine kinase-like ATPase, C-terminal domain"/>
    <property type="match status" value="1"/>
</dbReference>
<dbReference type="Gene3D" id="3.30.450.20">
    <property type="entry name" value="PAS domain"/>
    <property type="match status" value="2"/>
</dbReference>
<dbReference type="InterPro" id="IPR036890">
    <property type="entry name" value="HATPase_C_sf"/>
</dbReference>
<dbReference type="InterPro" id="IPR005467">
    <property type="entry name" value="His_kinase_dom"/>
</dbReference>
<dbReference type="InterPro" id="IPR003661">
    <property type="entry name" value="HisK_dim/P_dom"/>
</dbReference>
<dbReference type="InterPro" id="IPR036097">
    <property type="entry name" value="HisK_dim/P_sf"/>
</dbReference>
<dbReference type="InterPro" id="IPR001610">
    <property type="entry name" value="PAC"/>
</dbReference>
<dbReference type="InterPro" id="IPR000014">
    <property type="entry name" value="PAS"/>
</dbReference>
<dbReference type="InterPro" id="IPR000700">
    <property type="entry name" value="PAS-assoc_C"/>
</dbReference>
<dbReference type="InterPro" id="IPR035965">
    <property type="entry name" value="PAS-like_dom_sf"/>
</dbReference>
<dbReference type="InterPro" id="IPR013767">
    <property type="entry name" value="PAS_fold"/>
</dbReference>
<dbReference type="InterPro" id="IPR053564">
    <property type="entry name" value="Sensor_kinase_FixL-like"/>
</dbReference>
<dbReference type="InterPro" id="IPR004358">
    <property type="entry name" value="Sig_transdc_His_kin-like_C"/>
</dbReference>
<dbReference type="NCBIfam" id="NF041777">
    <property type="entry name" value="sens_FixL_Rhizob"/>
    <property type="match status" value="1"/>
</dbReference>
<dbReference type="NCBIfam" id="TIGR00229">
    <property type="entry name" value="sensory_box"/>
    <property type="match status" value="2"/>
</dbReference>
<dbReference type="PANTHER" id="PTHR43065:SF46">
    <property type="entry name" value="C4-DICARBOXYLATE TRANSPORT SENSOR PROTEIN DCTB"/>
    <property type="match status" value="1"/>
</dbReference>
<dbReference type="PANTHER" id="PTHR43065">
    <property type="entry name" value="SENSOR HISTIDINE KINASE"/>
    <property type="match status" value="1"/>
</dbReference>
<dbReference type="Pfam" id="PF02518">
    <property type="entry name" value="HATPase_c"/>
    <property type="match status" value="1"/>
</dbReference>
<dbReference type="Pfam" id="PF00512">
    <property type="entry name" value="HisKA"/>
    <property type="match status" value="1"/>
</dbReference>
<dbReference type="Pfam" id="PF00989">
    <property type="entry name" value="PAS"/>
    <property type="match status" value="2"/>
</dbReference>
<dbReference type="PRINTS" id="PR00344">
    <property type="entry name" value="BCTRLSENSOR"/>
</dbReference>
<dbReference type="SMART" id="SM00387">
    <property type="entry name" value="HATPase_c"/>
    <property type="match status" value="1"/>
</dbReference>
<dbReference type="SMART" id="SM00388">
    <property type="entry name" value="HisKA"/>
    <property type="match status" value="1"/>
</dbReference>
<dbReference type="SMART" id="SM00086">
    <property type="entry name" value="PAC"/>
    <property type="match status" value="2"/>
</dbReference>
<dbReference type="SMART" id="SM00091">
    <property type="entry name" value="PAS"/>
    <property type="match status" value="2"/>
</dbReference>
<dbReference type="SUPFAM" id="SSF55874">
    <property type="entry name" value="ATPase domain of HSP90 chaperone/DNA topoisomerase II/histidine kinase"/>
    <property type="match status" value="1"/>
</dbReference>
<dbReference type="SUPFAM" id="SSF47384">
    <property type="entry name" value="Homodimeric domain of signal transducing histidine kinase"/>
    <property type="match status" value="1"/>
</dbReference>
<dbReference type="SUPFAM" id="SSF55785">
    <property type="entry name" value="PYP-like sensor domain (PAS domain)"/>
    <property type="match status" value="2"/>
</dbReference>
<dbReference type="PROSITE" id="PS50109">
    <property type="entry name" value="HIS_KIN"/>
    <property type="match status" value="1"/>
</dbReference>
<dbReference type="PROSITE" id="PS50113">
    <property type="entry name" value="PAC"/>
    <property type="match status" value="2"/>
</dbReference>
<dbReference type="PROSITE" id="PS50112">
    <property type="entry name" value="PAS"/>
    <property type="match status" value="2"/>
</dbReference>
<evidence type="ECO:0000255" key="1">
    <source>
        <dbReference type="PROSITE-ProRule" id="PRU00107"/>
    </source>
</evidence>
<evidence type="ECO:0000255" key="2">
    <source>
        <dbReference type="PROSITE-ProRule" id="PRU00140"/>
    </source>
</evidence>
<evidence type="ECO:0000255" key="3">
    <source>
        <dbReference type="PROSITE-ProRule" id="PRU00141"/>
    </source>
</evidence>
<evidence type="ECO:0007829" key="4">
    <source>
        <dbReference type="PDB" id="1XJ3"/>
    </source>
</evidence>
<evidence type="ECO:0007829" key="5">
    <source>
        <dbReference type="PDB" id="2VV6"/>
    </source>
</evidence>
<evidence type="ECO:0007829" key="6">
    <source>
        <dbReference type="PDB" id="4GCZ"/>
    </source>
</evidence>
<evidence type="ECO:0007829" key="7">
    <source>
        <dbReference type="PDB" id="8A3U"/>
    </source>
</evidence>
<sequence>MAPTRVTHPPDDGRGEHFRVRIEGFGVGTWDLDLKTWALDWSDTARTLLGIGQDQPASYDLFLSRLEPDDRERVESAIKRVSERGGGFDVSFRVAGTSNAGQWIRARAGLIRDEAGTARHLSGIFLDIDEEKQVEGALRTRETHLRSILHTIPDAMIVIDGHGIIQLFSTAAERLFGWSELEAIGQNVNILMPEPDRSRHDSYISRYRTTSDPHIIGIGRIVTGKRRDGTTFPMHLSIGEMQSGGEPYFTGFVRDLTEHQQTQARLQELQSELVHVSRLSAMGEMASALAHELNQPLAAISNYMKGSRRLLAGSSDPNTPKVESALDRAAEQALRAGQIIRRLRDFVARGESEKRVESLSKLIEEAGALGLAGAREQNVQLRFSLDPGADLVLADRVQIQQVLVNLFRNALEAMAQSQRRELVVTNTPAADDMIEVEVSDTGSGFQDDVIPNLFQTFFTTKDTGMGVGLSISRSIIEAHGGRMWAESNASGGATFRFTLPAADEN</sequence>
<organism>
    <name type="scientific">Bradyrhizobium diazoefficiens (strain JCM 10833 / BCRC 13528 / IAM 13628 / NBRC 14792 / USDA 110)</name>
    <dbReference type="NCBI Taxonomy" id="224911"/>
    <lineage>
        <taxon>Bacteria</taxon>
        <taxon>Pseudomonadati</taxon>
        <taxon>Pseudomonadota</taxon>
        <taxon>Alphaproteobacteria</taxon>
        <taxon>Hyphomicrobiales</taxon>
        <taxon>Nitrobacteraceae</taxon>
        <taxon>Bradyrhizobium</taxon>
    </lineage>
</organism>
<feature type="chain" id="PRO_0000074764" description="Sensor protein FixL">
    <location>
        <begin position="1"/>
        <end position="505"/>
    </location>
</feature>
<feature type="domain" description="PAS 1" evidence="2">
    <location>
        <begin position="14"/>
        <end position="85"/>
    </location>
</feature>
<feature type="domain" description="PAC 1" evidence="3">
    <location>
        <begin position="88"/>
        <end position="140"/>
    </location>
</feature>
<feature type="domain" description="PAS 2" evidence="2">
    <location>
        <begin position="141"/>
        <end position="208"/>
    </location>
</feature>
<feature type="domain" description="PAC 2" evidence="3">
    <location>
        <begin position="209"/>
        <end position="268"/>
    </location>
</feature>
<feature type="domain" description="Histidine kinase" evidence="1">
    <location>
        <begin position="288"/>
        <end position="503"/>
    </location>
</feature>
<feature type="binding site" description="axial binding residue">
    <location>
        <position position="200"/>
    </location>
    <ligand>
        <name>heme</name>
        <dbReference type="ChEBI" id="CHEBI:30413"/>
    </ligand>
    <ligandPart>
        <name>Fe</name>
        <dbReference type="ChEBI" id="CHEBI:18248"/>
    </ligandPart>
</feature>
<feature type="modified residue" description="Phosphohistidine; by autocatalysis" evidence="1">
    <location>
        <position position="291"/>
    </location>
</feature>
<feature type="strand" evidence="5">
    <location>
        <begin position="155"/>
        <end position="160"/>
    </location>
</feature>
<feature type="strand" evidence="5">
    <location>
        <begin position="163"/>
        <end position="168"/>
    </location>
</feature>
<feature type="helix" evidence="5">
    <location>
        <begin position="170"/>
        <end position="176"/>
    </location>
</feature>
<feature type="helix" evidence="5">
    <location>
        <begin position="180"/>
        <end position="183"/>
    </location>
</feature>
<feature type="helix" evidence="5">
    <location>
        <begin position="188"/>
        <end position="191"/>
    </location>
</feature>
<feature type="helix" evidence="5">
    <location>
        <begin position="196"/>
        <end position="210"/>
    </location>
</feature>
<feature type="turn" evidence="5">
    <location>
        <begin position="216"/>
        <end position="218"/>
    </location>
</feature>
<feature type="strand" evidence="5">
    <location>
        <begin position="220"/>
        <end position="225"/>
    </location>
</feature>
<feature type="strand" evidence="5">
    <location>
        <begin position="231"/>
        <end position="243"/>
    </location>
</feature>
<feature type="strand" evidence="5">
    <location>
        <begin position="246"/>
        <end position="255"/>
    </location>
</feature>
<feature type="helix" evidence="4">
    <location>
        <begin position="257"/>
        <end position="268"/>
    </location>
</feature>
<feature type="helix" evidence="6">
    <location>
        <begin position="277"/>
        <end position="311"/>
    </location>
</feature>
<feature type="helix" evidence="6">
    <location>
        <begin position="319"/>
        <end position="347"/>
    </location>
</feature>
<feature type="strand" evidence="6">
    <location>
        <begin position="355"/>
        <end position="358"/>
    </location>
</feature>
<feature type="helix" evidence="6">
    <location>
        <begin position="359"/>
        <end position="370"/>
    </location>
</feature>
<feature type="turn" evidence="6">
    <location>
        <begin position="371"/>
        <end position="378"/>
    </location>
</feature>
<feature type="strand" evidence="6">
    <location>
        <begin position="380"/>
        <end position="384"/>
    </location>
</feature>
<feature type="helix" evidence="6">
    <location>
        <begin position="387"/>
        <end position="389"/>
    </location>
</feature>
<feature type="strand" evidence="6">
    <location>
        <begin position="391"/>
        <end position="394"/>
    </location>
</feature>
<feature type="helix" evidence="6">
    <location>
        <begin position="396"/>
        <end position="413"/>
    </location>
</feature>
<feature type="turn" evidence="6">
    <location>
        <begin position="414"/>
        <end position="416"/>
    </location>
</feature>
<feature type="strand" evidence="6">
    <location>
        <begin position="421"/>
        <end position="429"/>
    </location>
</feature>
<feature type="turn" evidence="6">
    <location>
        <begin position="430"/>
        <end position="432"/>
    </location>
</feature>
<feature type="strand" evidence="6">
    <location>
        <begin position="433"/>
        <end position="439"/>
    </location>
</feature>
<feature type="turn" evidence="6">
    <location>
        <begin position="447"/>
        <end position="449"/>
    </location>
</feature>
<feature type="helix" evidence="6">
    <location>
        <begin position="450"/>
        <end position="452"/>
    </location>
</feature>
<feature type="strand" evidence="7">
    <location>
        <begin position="461"/>
        <end position="463"/>
    </location>
</feature>
<feature type="helix" evidence="6">
    <location>
        <begin position="468"/>
        <end position="478"/>
    </location>
</feature>
<feature type="strand" evidence="6">
    <location>
        <begin position="483"/>
        <end position="487"/>
    </location>
</feature>
<feature type="strand" evidence="6">
    <location>
        <begin position="491"/>
        <end position="501"/>
    </location>
</feature>